<protein>
    <recommendedName>
        <fullName evidence="1">Large ribosomal subunit protein uL18</fullName>
    </recommendedName>
    <alternativeName>
        <fullName evidence="2">50S ribosomal protein L18</fullName>
    </alternativeName>
</protein>
<proteinExistence type="inferred from homology"/>
<gene>
    <name evidence="1" type="primary">rplR</name>
    <name type="ordered locus">RP643</name>
</gene>
<reference key="1">
    <citation type="journal article" date="1998" name="Nature">
        <title>The genome sequence of Rickettsia prowazekii and the origin of mitochondria.</title>
        <authorList>
            <person name="Andersson S.G.E."/>
            <person name="Zomorodipour A."/>
            <person name="Andersson J.O."/>
            <person name="Sicheritz-Ponten T."/>
            <person name="Alsmark U.C.M."/>
            <person name="Podowski R.M."/>
            <person name="Naeslund A.K."/>
            <person name="Eriksson A.-S."/>
            <person name="Winkler H.H."/>
            <person name="Kurland C.G."/>
        </authorList>
    </citation>
    <scope>NUCLEOTIDE SEQUENCE [LARGE SCALE GENOMIC DNA]</scope>
    <source>
        <strain>Madrid E</strain>
    </source>
</reference>
<dbReference type="EMBL" id="AJ235272">
    <property type="protein sequence ID" value="CAA15083.1"/>
    <property type="molecule type" value="Genomic_DNA"/>
</dbReference>
<dbReference type="PIR" id="A71670">
    <property type="entry name" value="A71670"/>
</dbReference>
<dbReference type="RefSeq" id="NP_221007.1">
    <property type="nucleotide sequence ID" value="NC_000963.1"/>
</dbReference>
<dbReference type="RefSeq" id="WP_004596225.1">
    <property type="nucleotide sequence ID" value="NC_000963.1"/>
</dbReference>
<dbReference type="SMR" id="Q9ZCS1"/>
<dbReference type="STRING" id="272947.gene:17555720"/>
<dbReference type="EnsemblBacteria" id="CAA15083">
    <property type="protein sequence ID" value="CAA15083"/>
    <property type="gene ID" value="CAA15083"/>
</dbReference>
<dbReference type="GeneID" id="57569768"/>
<dbReference type="KEGG" id="rpr:RP643"/>
<dbReference type="PATRIC" id="fig|272947.5.peg.665"/>
<dbReference type="eggNOG" id="COG0256">
    <property type="taxonomic scope" value="Bacteria"/>
</dbReference>
<dbReference type="HOGENOM" id="CLU_098841_0_1_5"/>
<dbReference type="OrthoDB" id="9810939at2"/>
<dbReference type="Proteomes" id="UP000002480">
    <property type="component" value="Chromosome"/>
</dbReference>
<dbReference type="GO" id="GO:0022625">
    <property type="term" value="C:cytosolic large ribosomal subunit"/>
    <property type="evidence" value="ECO:0007669"/>
    <property type="project" value="TreeGrafter"/>
</dbReference>
<dbReference type="GO" id="GO:0008097">
    <property type="term" value="F:5S rRNA binding"/>
    <property type="evidence" value="ECO:0007669"/>
    <property type="project" value="TreeGrafter"/>
</dbReference>
<dbReference type="GO" id="GO:0003735">
    <property type="term" value="F:structural constituent of ribosome"/>
    <property type="evidence" value="ECO:0007669"/>
    <property type="project" value="InterPro"/>
</dbReference>
<dbReference type="GO" id="GO:0006412">
    <property type="term" value="P:translation"/>
    <property type="evidence" value="ECO:0007669"/>
    <property type="project" value="UniProtKB-UniRule"/>
</dbReference>
<dbReference type="CDD" id="cd00432">
    <property type="entry name" value="Ribosomal_L18_L5e"/>
    <property type="match status" value="1"/>
</dbReference>
<dbReference type="FunFam" id="3.30.420.100:FF:000001">
    <property type="entry name" value="50S ribosomal protein L18"/>
    <property type="match status" value="1"/>
</dbReference>
<dbReference type="Gene3D" id="3.30.420.100">
    <property type="match status" value="1"/>
</dbReference>
<dbReference type="HAMAP" id="MF_01337_B">
    <property type="entry name" value="Ribosomal_uL18_B"/>
    <property type="match status" value="1"/>
</dbReference>
<dbReference type="InterPro" id="IPR004389">
    <property type="entry name" value="Ribosomal_uL18_bac-type"/>
</dbReference>
<dbReference type="InterPro" id="IPR005484">
    <property type="entry name" value="Ribosomal_uL18_bac/euk"/>
</dbReference>
<dbReference type="NCBIfam" id="TIGR00060">
    <property type="entry name" value="L18_bact"/>
    <property type="match status" value="1"/>
</dbReference>
<dbReference type="PANTHER" id="PTHR12899">
    <property type="entry name" value="39S RIBOSOMAL PROTEIN L18, MITOCHONDRIAL"/>
    <property type="match status" value="1"/>
</dbReference>
<dbReference type="PANTHER" id="PTHR12899:SF3">
    <property type="entry name" value="LARGE RIBOSOMAL SUBUNIT PROTEIN UL18M"/>
    <property type="match status" value="1"/>
</dbReference>
<dbReference type="Pfam" id="PF00861">
    <property type="entry name" value="Ribosomal_L18p"/>
    <property type="match status" value="1"/>
</dbReference>
<dbReference type="SUPFAM" id="SSF53137">
    <property type="entry name" value="Translational machinery components"/>
    <property type="match status" value="1"/>
</dbReference>
<accession>Q9ZCS1</accession>
<sequence>MRSAKLKFEKRKSRIRYKISKTSNRMRLSIFKSCRHIYAQIIDDSKSITIAAASTLDKKIKKIKKSHCNIENAIKVGKEIAKKADSAGIKEVVFDRGGYKYHGIIKALADAAREKIKF</sequence>
<feature type="chain" id="PRO_0000131332" description="Large ribosomal subunit protein uL18">
    <location>
        <begin position="1"/>
        <end position="118"/>
    </location>
</feature>
<evidence type="ECO:0000255" key="1">
    <source>
        <dbReference type="HAMAP-Rule" id="MF_01337"/>
    </source>
</evidence>
<evidence type="ECO:0000305" key="2"/>
<organism>
    <name type="scientific">Rickettsia prowazekii (strain Madrid E)</name>
    <dbReference type="NCBI Taxonomy" id="272947"/>
    <lineage>
        <taxon>Bacteria</taxon>
        <taxon>Pseudomonadati</taxon>
        <taxon>Pseudomonadota</taxon>
        <taxon>Alphaproteobacteria</taxon>
        <taxon>Rickettsiales</taxon>
        <taxon>Rickettsiaceae</taxon>
        <taxon>Rickettsieae</taxon>
        <taxon>Rickettsia</taxon>
        <taxon>typhus group</taxon>
    </lineage>
</organism>
<keyword id="KW-1185">Reference proteome</keyword>
<keyword id="KW-0687">Ribonucleoprotein</keyword>
<keyword id="KW-0689">Ribosomal protein</keyword>
<keyword id="KW-0694">RNA-binding</keyword>
<keyword id="KW-0699">rRNA-binding</keyword>
<name>RL18_RICPR</name>
<comment type="function">
    <text evidence="1">This is one of the proteins that bind and probably mediate the attachment of the 5S RNA into the large ribosomal subunit, where it forms part of the central protuberance.</text>
</comment>
<comment type="subunit">
    <text evidence="1">Part of the 50S ribosomal subunit; part of the 5S rRNA/L5/L18/L25 subcomplex. Contacts the 5S and 23S rRNAs.</text>
</comment>
<comment type="similarity">
    <text evidence="1">Belongs to the universal ribosomal protein uL18 family.</text>
</comment>